<name>HEM3_BRUAB</name>
<gene>
    <name evidence="1" type="primary">hemC</name>
    <name type="ordered locus">BruAb1_1864</name>
</gene>
<dbReference type="EC" id="2.5.1.61" evidence="1"/>
<dbReference type="EMBL" id="AE017223">
    <property type="protein sequence ID" value="AAX75176.1"/>
    <property type="molecule type" value="Genomic_DNA"/>
</dbReference>
<dbReference type="RefSeq" id="WP_002964957.1">
    <property type="nucleotide sequence ID" value="NC_006932.1"/>
</dbReference>
<dbReference type="SMR" id="Q57B08"/>
<dbReference type="EnsemblBacteria" id="AAX75176">
    <property type="protein sequence ID" value="AAX75176"/>
    <property type="gene ID" value="BruAb1_1864"/>
</dbReference>
<dbReference type="GeneID" id="93017780"/>
<dbReference type="KEGG" id="bmb:BruAb1_1864"/>
<dbReference type="HOGENOM" id="CLU_019704_1_2_5"/>
<dbReference type="UniPathway" id="UPA00251">
    <property type="reaction ID" value="UER00319"/>
</dbReference>
<dbReference type="Proteomes" id="UP000000540">
    <property type="component" value="Chromosome I"/>
</dbReference>
<dbReference type="GO" id="GO:0005737">
    <property type="term" value="C:cytoplasm"/>
    <property type="evidence" value="ECO:0007669"/>
    <property type="project" value="TreeGrafter"/>
</dbReference>
<dbReference type="GO" id="GO:0004418">
    <property type="term" value="F:hydroxymethylbilane synthase activity"/>
    <property type="evidence" value="ECO:0007669"/>
    <property type="project" value="UniProtKB-UniRule"/>
</dbReference>
<dbReference type="GO" id="GO:0006782">
    <property type="term" value="P:protoporphyrinogen IX biosynthetic process"/>
    <property type="evidence" value="ECO:0007669"/>
    <property type="project" value="UniProtKB-UniRule"/>
</dbReference>
<dbReference type="FunFam" id="3.40.190.10:FF:000004">
    <property type="entry name" value="Porphobilinogen deaminase"/>
    <property type="match status" value="1"/>
</dbReference>
<dbReference type="FunFam" id="3.40.190.10:FF:000005">
    <property type="entry name" value="Porphobilinogen deaminase"/>
    <property type="match status" value="1"/>
</dbReference>
<dbReference type="Gene3D" id="3.40.190.10">
    <property type="entry name" value="Periplasmic binding protein-like II"/>
    <property type="match status" value="2"/>
</dbReference>
<dbReference type="Gene3D" id="3.30.160.40">
    <property type="entry name" value="Porphobilinogen deaminase, C-terminal domain"/>
    <property type="match status" value="1"/>
</dbReference>
<dbReference type="HAMAP" id="MF_00260">
    <property type="entry name" value="Porphobil_deam"/>
    <property type="match status" value="1"/>
</dbReference>
<dbReference type="InterPro" id="IPR000860">
    <property type="entry name" value="HemC"/>
</dbReference>
<dbReference type="InterPro" id="IPR022419">
    <property type="entry name" value="Porphobilin_deaminase_cofac_BS"/>
</dbReference>
<dbReference type="InterPro" id="IPR022417">
    <property type="entry name" value="Porphobilin_deaminase_N"/>
</dbReference>
<dbReference type="InterPro" id="IPR022418">
    <property type="entry name" value="Porphobilinogen_deaminase_C"/>
</dbReference>
<dbReference type="InterPro" id="IPR036803">
    <property type="entry name" value="Porphobilinogen_deaminase_C_sf"/>
</dbReference>
<dbReference type="NCBIfam" id="TIGR00212">
    <property type="entry name" value="hemC"/>
    <property type="match status" value="1"/>
</dbReference>
<dbReference type="PANTHER" id="PTHR11557">
    <property type="entry name" value="PORPHOBILINOGEN DEAMINASE"/>
    <property type="match status" value="1"/>
</dbReference>
<dbReference type="PANTHER" id="PTHR11557:SF0">
    <property type="entry name" value="PORPHOBILINOGEN DEAMINASE"/>
    <property type="match status" value="1"/>
</dbReference>
<dbReference type="Pfam" id="PF01379">
    <property type="entry name" value="Porphobil_deam"/>
    <property type="match status" value="1"/>
</dbReference>
<dbReference type="Pfam" id="PF03900">
    <property type="entry name" value="Porphobil_deamC"/>
    <property type="match status" value="1"/>
</dbReference>
<dbReference type="PIRSF" id="PIRSF001438">
    <property type="entry name" value="4pyrrol_synth_OHMeBilane_synth"/>
    <property type="match status" value="1"/>
</dbReference>
<dbReference type="PRINTS" id="PR00151">
    <property type="entry name" value="PORPHBDMNASE"/>
</dbReference>
<dbReference type="SUPFAM" id="SSF53850">
    <property type="entry name" value="Periplasmic binding protein-like II"/>
    <property type="match status" value="1"/>
</dbReference>
<dbReference type="SUPFAM" id="SSF54782">
    <property type="entry name" value="Porphobilinogen deaminase (hydroxymethylbilane synthase), C-terminal domain"/>
    <property type="match status" value="1"/>
</dbReference>
<dbReference type="PROSITE" id="PS00533">
    <property type="entry name" value="PORPHOBILINOGEN_DEAM"/>
    <property type="match status" value="1"/>
</dbReference>
<feature type="chain" id="PRO_0000304216" description="Porphobilinogen deaminase">
    <location>
        <begin position="1"/>
        <end position="314"/>
    </location>
</feature>
<feature type="modified residue" description="S-(dipyrrolylmethanemethyl)cysteine" evidence="1">
    <location>
        <position position="249"/>
    </location>
</feature>
<reference key="1">
    <citation type="journal article" date="2005" name="J. Bacteriol.">
        <title>Completion of the genome sequence of Brucella abortus and comparison to the highly similar genomes of Brucella melitensis and Brucella suis.</title>
        <authorList>
            <person name="Halling S.M."/>
            <person name="Peterson-Burch B.D."/>
            <person name="Bricker B.J."/>
            <person name="Zuerner R.L."/>
            <person name="Qing Z."/>
            <person name="Li L.-L."/>
            <person name="Kapur V."/>
            <person name="Alt D.P."/>
            <person name="Olsen S.C."/>
        </authorList>
    </citation>
    <scope>NUCLEOTIDE SEQUENCE [LARGE SCALE GENOMIC DNA]</scope>
    <source>
        <strain>9-941</strain>
    </source>
</reference>
<evidence type="ECO:0000255" key="1">
    <source>
        <dbReference type="HAMAP-Rule" id="MF_00260"/>
    </source>
</evidence>
<protein>
    <recommendedName>
        <fullName evidence="1">Porphobilinogen deaminase</fullName>
        <shortName evidence="1">PBG</shortName>
        <ecNumber evidence="1">2.5.1.61</ecNumber>
    </recommendedName>
    <alternativeName>
        <fullName evidence="1">Hydroxymethylbilane synthase</fullName>
        <shortName evidence="1">HMBS</shortName>
    </alternativeName>
    <alternativeName>
        <fullName evidence="1">Pre-uroporphyrinogen synthase</fullName>
    </alternativeName>
</protein>
<sequence>MQTASFKNGTLKIGTRGSKLALAQAYLTRRLLQEAHGLPEDAIEILPMSTAGDRIQDRPLSEVGGKGLFTEEIEQALKDGRIDIAVHSTKDMPTALPEGLHLSVFLEREDPRDAFIGRSARRFMDLPQGATVGSSSLRRQALIRRLRPDIEVVMYRGNVDTRLRKLDAGEVDGTFLACAGLRRLGLADVITDVLDPSVFPPAPGQGAIGIESRIGDERIDVLLAPLAHRETQIALACERAFLGALDGSCRTPIAGLATVEGDRLSFRGMILTPDGRQAHEVTAEGVVSDAAALGTDAANRVRAMAGPHFFDGWQ</sequence>
<accession>Q57B08</accession>
<organism>
    <name type="scientific">Brucella abortus biovar 1 (strain 9-941)</name>
    <dbReference type="NCBI Taxonomy" id="262698"/>
    <lineage>
        <taxon>Bacteria</taxon>
        <taxon>Pseudomonadati</taxon>
        <taxon>Pseudomonadota</taxon>
        <taxon>Alphaproteobacteria</taxon>
        <taxon>Hyphomicrobiales</taxon>
        <taxon>Brucellaceae</taxon>
        <taxon>Brucella/Ochrobactrum group</taxon>
        <taxon>Brucella</taxon>
    </lineage>
</organism>
<keyword id="KW-0627">Porphyrin biosynthesis</keyword>
<keyword id="KW-0808">Transferase</keyword>
<proteinExistence type="inferred from homology"/>
<comment type="function">
    <text evidence="1">Tetrapolymerization of the monopyrrole PBG into the hydroxymethylbilane pre-uroporphyrinogen in several discrete steps.</text>
</comment>
<comment type="catalytic activity">
    <reaction evidence="1">
        <text>4 porphobilinogen + H2O = hydroxymethylbilane + 4 NH4(+)</text>
        <dbReference type="Rhea" id="RHEA:13185"/>
        <dbReference type="ChEBI" id="CHEBI:15377"/>
        <dbReference type="ChEBI" id="CHEBI:28938"/>
        <dbReference type="ChEBI" id="CHEBI:57845"/>
        <dbReference type="ChEBI" id="CHEBI:58126"/>
        <dbReference type="EC" id="2.5.1.61"/>
    </reaction>
</comment>
<comment type="cofactor">
    <cofactor evidence="1">
        <name>dipyrromethane</name>
        <dbReference type="ChEBI" id="CHEBI:60342"/>
    </cofactor>
    <text evidence="1">Binds 1 dipyrromethane group covalently.</text>
</comment>
<comment type="pathway">
    <text evidence="1">Porphyrin-containing compound metabolism; protoporphyrin-IX biosynthesis; coproporphyrinogen-III from 5-aminolevulinate: step 2/4.</text>
</comment>
<comment type="subunit">
    <text evidence="1">Monomer.</text>
</comment>
<comment type="miscellaneous">
    <text evidence="1">The porphobilinogen subunits are added to the dipyrromethane group.</text>
</comment>
<comment type="similarity">
    <text evidence="1">Belongs to the HMBS family.</text>
</comment>